<accession>Q9C0W7</accession>
<accession>O13623</accession>
<accession>O13624</accession>
<sequence length="878" mass="100079">MVASNNMKGLRAFISDLRSLEHDDEEKRVNVELAKIRAKFQSSTLSAYDRKKYVSKLLYIYMLGYPITFGHMEAAKLLSGTKYSEKLIGYLAVALLLNENHELMKLVINSIKKDLLSHDSLQNSLALHTIANIGGRELCETVYYDIYKLLMSASNENIVRQKSALALLHIYRKFPDLINPEWFEPIVMILGDDDLNVSLAVSNFVNLIVIREPKYQKFAYGKAVGKLKNIVFEHGYSSDYLYYSVPCPWLQVNLCRILLACERPSDNPTRATLIRVLDRILSLPNDNSNVQQVNAVNAILFEAIKLAFLVDESHSLYEKCMDRLADMIADKESNIRYLAFETTAYLISCGHSITSLKHYKELILSSLRYKDVSLRKKSLELLYMMCDEENAKLIVADLLQYLPHLDSVTQEDLISKVAIISETFATDYEWYVDVTIQLLRIAGKSADDGVWHQLVHVIVNNEEIQEYATKRLFSLLQSETIHECLVKAGGYVLGEFGHLITDYPDSQPVHQFSTIYRKLNVSSPSTRVLLLTTLIKLANLQPELNDRIAKVFQEYSTIINPEVQQRACEYLQLLKMPRDFLQLVCDEVPPFLDGNRDGVHPKSRPSSKVNLVDTYPQTIPNVSKPSTPIDVPEYDISACLPGFYRLCWKDKGILYQDSQIQIGVRSEYHNSEGAIYLYYENRQSNTLKSLSSTLIRTFSTFHLATTFQDTNLPSGVQLQQKYVMSGVNEIFEPPIIHVSYVTGVIRSIDLQLPVLLSKFMKPTIFDSYDFFNHWGQMGVEREAQLTFGLNSKDRKLDAKRLTKIVSGFHWGICQNVDSIALNIVGAGIIRFGTQNVGCLLRIEPNYEQNLIRLSIRSTNTSIANTLAKEMQEILRNSF</sequence>
<dbReference type="EMBL" id="CU329671">
    <property type="protein sequence ID" value="CAC37364.1"/>
    <property type="molecule type" value="Genomic_DNA"/>
</dbReference>
<dbReference type="EMBL" id="AB004535">
    <property type="protein sequence ID" value="BAA21411.1"/>
    <property type="molecule type" value="Genomic_DNA"/>
</dbReference>
<dbReference type="EMBL" id="AB004536">
    <property type="protein sequence ID" value="BAA21412.1"/>
    <property type="molecule type" value="Genomic_DNA"/>
</dbReference>
<dbReference type="RefSeq" id="NP_595595.1">
    <property type="nucleotide sequence ID" value="NM_001021491.2"/>
</dbReference>
<dbReference type="SMR" id="Q9C0W7"/>
<dbReference type="BioGRID" id="277677">
    <property type="interactions" value="7"/>
</dbReference>
<dbReference type="FunCoup" id="Q9C0W7">
    <property type="interactions" value="450"/>
</dbReference>
<dbReference type="STRING" id="284812.Q9C0W7"/>
<dbReference type="iPTMnet" id="Q9C0W7"/>
<dbReference type="PaxDb" id="4896-SPBC691.03c.1"/>
<dbReference type="EnsemblFungi" id="SPBC691.03c.1">
    <property type="protein sequence ID" value="SPBC691.03c.1:pep"/>
    <property type="gene ID" value="SPBC691.03c"/>
</dbReference>
<dbReference type="GeneID" id="2541162"/>
<dbReference type="KEGG" id="spo:2541162"/>
<dbReference type="PomBase" id="SPBC691.03c">
    <property type="gene designation" value="apl3"/>
</dbReference>
<dbReference type="VEuPathDB" id="FungiDB:SPBC691.03c"/>
<dbReference type="eggNOG" id="KOG1077">
    <property type="taxonomic scope" value="Eukaryota"/>
</dbReference>
<dbReference type="HOGENOM" id="CLU_003824_1_0_1"/>
<dbReference type="InParanoid" id="Q9C0W7"/>
<dbReference type="OMA" id="PVLMHRY"/>
<dbReference type="PhylomeDB" id="Q9C0W7"/>
<dbReference type="Reactome" id="R-SPO-437239">
    <property type="pathway name" value="Recycling pathway of L1"/>
</dbReference>
<dbReference type="Reactome" id="R-SPO-6798695">
    <property type="pathway name" value="Neutrophil degranulation"/>
</dbReference>
<dbReference type="Reactome" id="R-SPO-8856825">
    <property type="pathway name" value="Cargo recognition for clathrin-mediated endocytosis"/>
</dbReference>
<dbReference type="Reactome" id="R-SPO-8856828">
    <property type="pathway name" value="Clathrin-mediated endocytosis"/>
</dbReference>
<dbReference type="Reactome" id="R-SPO-8866427">
    <property type="pathway name" value="VLDLR internalisation and degradation"/>
</dbReference>
<dbReference type="Reactome" id="R-SPO-8964038">
    <property type="pathway name" value="LDL clearance"/>
</dbReference>
<dbReference type="PRO" id="PR:Q9C0W7"/>
<dbReference type="Proteomes" id="UP000002485">
    <property type="component" value="Chromosome II"/>
</dbReference>
<dbReference type="GO" id="GO:0030122">
    <property type="term" value="C:AP-2 adaptor complex"/>
    <property type="evidence" value="ECO:0000269"/>
    <property type="project" value="PomBase"/>
</dbReference>
<dbReference type="GO" id="GO:0005938">
    <property type="term" value="C:cell cortex"/>
    <property type="evidence" value="ECO:0007005"/>
    <property type="project" value="PomBase"/>
</dbReference>
<dbReference type="GO" id="GO:0051285">
    <property type="term" value="C:cell cortex of cell tip"/>
    <property type="evidence" value="ECO:0000314"/>
    <property type="project" value="PomBase"/>
</dbReference>
<dbReference type="GO" id="GO:0032153">
    <property type="term" value="C:cell division site"/>
    <property type="evidence" value="ECO:0000314"/>
    <property type="project" value="PomBase"/>
</dbReference>
<dbReference type="GO" id="GO:0005905">
    <property type="term" value="C:clathrin-coated pit"/>
    <property type="evidence" value="ECO:0000269"/>
    <property type="project" value="PomBase"/>
</dbReference>
<dbReference type="GO" id="GO:0005829">
    <property type="term" value="C:cytosol"/>
    <property type="evidence" value="ECO:0007005"/>
    <property type="project" value="PomBase"/>
</dbReference>
<dbReference type="GO" id="GO:0005634">
    <property type="term" value="C:nucleus"/>
    <property type="evidence" value="ECO:0007005"/>
    <property type="project" value="PomBase"/>
</dbReference>
<dbReference type="GO" id="GO:0035615">
    <property type="term" value="F:clathrin adaptor activity"/>
    <property type="evidence" value="ECO:0000269"/>
    <property type="project" value="PomBase"/>
</dbReference>
<dbReference type="GO" id="GO:0072583">
    <property type="term" value="P:clathrin-dependent endocytosis"/>
    <property type="evidence" value="ECO:0000269"/>
    <property type="project" value="PomBase"/>
</dbReference>
<dbReference type="GO" id="GO:0006886">
    <property type="term" value="P:intracellular protein transport"/>
    <property type="evidence" value="ECO:0000305"/>
    <property type="project" value="PomBase"/>
</dbReference>
<dbReference type="FunFam" id="1.25.10.10:FF:000020">
    <property type="entry name" value="AP-2 complex subunit alpha"/>
    <property type="match status" value="1"/>
</dbReference>
<dbReference type="Gene3D" id="2.60.40.1230">
    <property type="match status" value="1"/>
</dbReference>
<dbReference type="Gene3D" id="1.25.10.10">
    <property type="entry name" value="Leucine-rich Repeat Variant"/>
    <property type="match status" value="1"/>
</dbReference>
<dbReference type="Gene3D" id="3.30.310.10">
    <property type="entry name" value="TATA-Binding Protein"/>
    <property type="match status" value="1"/>
</dbReference>
<dbReference type="InterPro" id="IPR050840">
    <property type="entry name" value="Adaptor_Complx_Large_Subunit"/>
</dbReference>
<dbReference type="InterPro" id="IPR017104">
    <property type="entry name" value="AP2_complex_asu"/>
</dbReference>
<dbReference type="InterPro" id="IPR011989">
    <property type="entry name" value="ARM-like"/>
</dbReference>
<dbReference type="InterPro" id="IPR016024">
    <property type="entry name" value="ARM-type_fold"/>
</dbReference>
<dbReference type="InterPro" id="IPR002553">
    <property type="entry name" value="Clathrin/coatomer_adapt-like_N"/>
</dbReference>
<dbReference type="InterPro" id="IPR003164">
    <property type="entry name" value="Clathrin_a-adaptin_app_sub_C"/>
</dbReference>
<dbReference type="InterPro" id="IPR008152">
    <property type="entry name" value="Clathrin_a/b/g-adaptin_app_Ig"/>
</dbReference>
<dbReference type="InterPro" id="IPR013041">
    <property type="entry name" value="Clathrin_app_Ig-like_sf"/>
</dbReference>
<dbReference type="InterPro" id="IPR009028">
    <property type="entry name" value="Coatomer/calthrin_app_sub_C"/>
</dbReference>
<dbReference type="InterPro" id="IPR012295">
    <property type="entry name" value="TBP_dom_sf"/>
</dbReference>
<dbReference type="PANTHER" id="PTHR22780">
    <property type="entry name" value="ADAPTIN, ALPHA/GAMMA/EPSILON"/>
    <property type="match status" value="1"/>
</dbReference>
<dbReference type="Pfam" id="PF01602">
    <property type="entry name" value="Adaptin_N"/>
    <property type="match status" value="1"/>
</dbReference>
<dbReference type="Pfam" id="PF02296">
    <property type="entry name" value="Alpha_adaptin_C"/>
    <property type="match status" value="1"/>
</dbReference>
<dbReference type="Pfam" id="PF02883">
    <property type="entry name" value="Alpha_adaptinC2"/>
    <property type="match status" value="1"/>
</dbReference>
<dbReference type="PIRSF" id="PIRSF037091">
    <property type="entry name" value="AP2_complex_alpha"/>
    <property type="match status" value="1"/>
</dbReference>
<dbReference type="SMART" id="SM00809">
    <property type="entry name" value="Alpha_adaptinC2"/>
    <property type="match status" value="1"/>
</dbReference>
<dbReference type="SUPFAM" id="SSF48371">
    <property type="entry name" value="ARM repeat"/>
    <property type="match status" value="1"/>
</dbReference>
<dbReference type="SUPFAM" id="SSF49348">
    <property type="entry name" value="Clathrin adaptor appendage domain"/>
    <property type="match status" value="1"/>
</dbReference>
<dbReference type="SUPFAM" id="SSF55711">
    <property type="entry name" value="Subdomain of clathrin and coatomer appendage domain"/>
    <property type="match status" value="1"/>
</dbReference>
<feature type="chain" id="PRO_0000193736" description="AP-2 complex subunit alpha">
    <location>
        <begin position="1"/>
        <end position="878"/>
    </location>
</feature>
<keyword id="KW-1003">Cell membrane</keyword>
<keyword id="KW-0168">Coated pit</keyword>
<keyword id="KW-0254">Endocytosis</keyword>
<keyword id="KW-0472">Membrane</keyword>
<keyword id="KW-0653">Protein transport</keyword>
<keyword id="KW-1185">Reference proteome</keyword>
<keyword id="KW-0813">Transport</keyword>
<name>AP2A_SCHPO</name>
<comment type="function">
    <text evidence="1">Adaptins are components of the adaptor complexes which link clathrin to receptors in coated vesicles. Clathrin-associated protein complexes are believed to interact with the cytoplasmic tails of membrane proteins, leading to their selection and concentration. Alpha adaptin is a subunit of the plasma membrane adaptor (By similarity).</text>
</comment>
<comment type="subunit">
    <text evidence="1">Adaptor protein complex 2 (AP-2) is a heterotetramer composed of two large adaptins (alpha-type subunit apl3 and beta-type subunit apl1), a medium chain (mu-type subunit apm4) and a small adaptin (sigma-type subunit aps2).</text>
</comment>
<comment type="subcellular location">
    <subcellularLocation>
        <location evidence="1">Cell membrane</location>
    </subcellularLocation>
    <subcellularLocation>
        <location evidence="1">Membrane</location>
        <location evidence="1">Coated pit</location>
        <topology evidence="1">Peripheral membrane protein</topology>
        <orientation evidence="1">Cytoplasmic side</orientation>
    </subcellularLocation>
    <text evidence="1">Component of the coat surrounding the cytoplasmic face of coated vesicles in the plasma membrane.</text>
</comment>
<comment type="similarity">
    <text evidence="2">Belongs to the adaptor complexes large subunit family.</text>
</comment>
<organism>
    <name type="scientific">Schizosaccharomyces pombe (strain 972 / ATCC 24843)</name>
    <name type="common">Fission yeast</name>
    <dbReference type="NCBI Taxonomy" id="284812"/>
    <lineage>
        <taxon>Eukaryota</taxon>
        <taxon>Fungi</taxon>
        <taxon>Dikarya</taxon>
        <taxon>Ascomycota</taxon>
        <taxon>Taphrinomycotina</taxon>
        <taxon>Schizosaccharomycetes</taxon>
        <taxon>Schizosaccharomycetales</taxon>
        <taxon>Schizosaccharomycetaceae</taxon>
        <taxon>Schizosaccharomyces</taxon>
    </lineage>
</organism>
<proteinExistence type="inferred from homology"/>
<reference key="1">
    <citation type="journal article" date="2000" name="Yeast">
        <title>A 38 kb segment containing the cdc2 gene from the left arm of fission yeast chromosome II: sequence analysis and characterization of the genomic DNA and cDNAs encoded on the segment.</title>
        <authorList>
            <person name="Machida M."/>
            <person name="Yamazaki S."/>
            <person name="Kunihiro S."/>
            <person name="Tanaka T."/>
            <person name="Kushida N."/>
            <person name="Jinno K."/>
            <person name="Haikawa Y."/>
            <person name="Yamazaki J."/>
            <person name="Yamamoto S."/>
            <person name="Sekine M."/>
            <person name="Oguchi A."/>
            <person name="Nagai Y."/>
            <person name="Sakai M."/>
            <person name="Aoki K."/>
            <person name="Ogura K."/>
            <person name="Kudoh Y."/>
            <person name="Kikuchi H."/>
            <person name="Zhang M.Q."/>
            <person name="Yanagida M."/>
        </authorList>
    </citation>
    <scope>NUCLEOTIDE SEQUENCE [LARGE SCALE GENOMIC DNA]</scope>
    <source>
        <strain>972 / ATCC 24843</strain>
    </source>
</reference>
<reference key="2">
    <citation type="journal article" date="2002" name="Nature">
        <title>The genome sequence of Schizosaccharomyces pombe.</title>
        <authorList>
            <person name="Wood V."/>
            <person name="Gwilliam R."/>
            <person name="Rajandream M.A."/>
            <person name="Lyne M.H."/>
            <person name="Lyne R."/>
            <person name="Stewart A."/>
            <person name="Sgouros J.G."/>
            <person name="Peat N."/>
            <person name="Hayles J."/>
            <person name="Baker S.G."/>
            <person name="Basham D."/>
            <person name="Bowman S."/>
            <person name="Brooks K."/>
            <person name="Brown D."/>
            <person name="Brown S."/>
            <person name="Chillingworth T."/>
            <person name="Churcher C.M."/>
            <person name="Collins M."/>
            <person name="Connor R."/>
            <person name="Cronin A."/>
            <person name="Davis P."/>
            <person name="Feltwell T."/>
            <person name="Fraser A."/>
            <person name="Gentles S."/>
            <person name="Goble A."/>
            <person name="Hamlin N."/>
            <person name="Harris D.E."/>
            <person name="Hidalgo J."/>
            <person name="Hodgson G."/>
            <person name="Holroyd S."/>
            <person name="Hornsby T."/>
            <person name="Howarth S."/>
            <person name="Huckle E.J."/>
            <person name="Hunt S."/>
            <person name="Jagels K."/>
            <person name="James K.D."/>
            <person name="Jones L."/>
            <person name="Jones M."/>
            <person name="Leather S."/>
            <person name="McDonald S."/>
            <person name="McLean J."/>
            <person name="Mooney P."/>
            <person name="Moule S."/>
            <person name="Mungall K.L."/>
            <person name="Murphy L.D."/>
            <person name="Niblett D."/>
            <person name="Odell C."/>
            <person name="Oliver K."/>
            <person name="O'Neil S."/>
            <person name="Pearson D."/>
            <person name="Quail M.A."/>
            <person name="Rabbinowitsch E."/>
            <person name="Rutherford K.M."/>
            <person name="Rutter S."/>
            <person name="Saunders D."/>
            <person name="Seeger K."/>
            <person name="Sharp S."/>
            <person name="Skelton J."/>
            <person name="Simmonds M.N."/>
            <person name="Squares R."/>
            <person name="Squares S."/>
            <person name="Stevens K."/>
            <person name="Taylor K."/>
            <person name="Taylor R.G."/>
            <person name="Tivey A."/>
            <person name="Walsh S.V."/>
            <person name="Warren T."/>
            <person name="Whitehead S."/>
            <person name="Woodward J.R."/>
            <person name="Volckaert G."/>
            <person name="Aert R."/>
            <person name="Robben J."/>
            <person name="Grymonprez B."/>
            <person name="Weltjens I."/>
            <person name="Vanstreels E."/>
            <person name="Rieger M."/>
            <person name="Schaefer M."/>
            <person name="Mueller-Auer S."/>
            <person name="Gabel C."/>
            <person name="Fuchs M."/>
            <person name="Duesterhoeft A."/>
            <person name="Fritzc C."/>
            <person name="Holzer E."/>
            <person name="Moestl D."/>
            <person name="Hilbert H."/>
            <person name="Borzym K."/>
            <person name="Langer I."/>
            <person name="Beck A."/>
            <person name="Lehrach H."/>
            <person name="Reinhardt R."/>
            <person name="Pohl T.M."/>
            <person name="Eger P."/>
            <person name="Zimmermann W."/>
            <person name="Wedler H."/>
            <person name="Wambutt R."/>
            <person name="Purnelle B."/>
            <person name="Goffeau A."/>
            <person name="Cadieu E."/>
            <person name="Dreano S."/>
            <person name="Gloux S."/>
            <person name="Lelaure V."/>
            <person name="Mottier S."/>
            <person name="Galibert F."/>
            <person name="Aves S.J."/>
            <person name="Xiang Z."/>
            <person name="Hunt C."/>
            <person name="Moore K."/>
            <person name="Hurst S.M."/>
            <person name="Lucas M."/>
            <person name="Rochet M."/>
            <person name="Gaillardin C."/>
            <person name="Tallada V.A."/>
            <person name="Garzon A."/>
            <person name="Thode G."/>
            <person name="Daga R.R."/>
            <person name="Cruzado L."/>
            <person name="Jimenez J."/>
            <person name="Sanchez M."/>
            <person name="del Rey F."/>
            <person name="Benito J."/>
            <person name="Dominguez A."/>
            <person name="Revuelta J.L."/>
            <person name="Moreno S."/>
            <person name="Armstrong J."/>
            <person name="Forsburg S.L."/>
            <person name="Cerutti L."/>
            <person name="Lowe T."/>
            <person name="McCombie W.R."/>
            <person name="Paulsen I."/>
            <person name="Potashkin J."/>
            <person name="Shpakovski G.V."/>
            <person name="Ussery D."/>
            <person name="Barrell B.G."/>
            <person name="Nurse P."/>
        </authorList>
    </citation>
    <scope>NUCLEOTIDE SEQUENCE [LARGE SCALE GENOMIC DNA]</scope>
    <source>
        <strain>972 / ATCC 24843</strain>
    </source>
</reference>
<gene>
    <name type="primary">apl3</name>
    <name type="ORF">pi033</name>
    <name type="ORF">SPBC691.03c</name>
</gene>
<evidence type="ECO:0000250" key="1"/>
<evidence type="ECO:0000305" key="2"/>
<protein>
    <recommendedName>
        <fullName>AP-2 complex subunit alpha</fullName>
    </recommendedName>
    <alternativeName>
        <fullName>Alpha-adaptin</fullName>
    </alternativeName>
    <alternativeName>
        <fullName>Clathrin assembly protein complex 2 alpha large chain</fullName>
    </alternativeName>
    <alternativeName>
        <fullName>Clathrin assembly protein large alpha chain</fullName>
    </alternativeName>
</protein>